<keyword id="KW-0072">Autophagy</keyword>
<keyword id="KW-0175">Coiled coil</keyword>
<keyword id="KW-0963">Cytoplasm</keyword>
<keyword id="KW-0469">Meiosis</keyword>
<keyword id="KW-0472">Membrane</keyword>
<keyword id="KW-1185">Reference proteome</keyword>
<gene>
    <name evidence="6" type="primary">atg38</name>
    <name type="synonym">mug167</name>
    <name evidence="6" type="ORF">SPBC660.08</name>
</gene>
<feature type="chain" id="PRO_0000278515" description="PtdIns3K complex I subunit atg38">
    <location>
        <begin position="1"/>
        <end position="424"/>
    </location>
</feature>
<feature type="region of interest" description="Required for interaction with atg8" evidence="3">
    <location>
        <begin position="73"/>
        <end position="212"/>
    </location>
</feature>
<feature type="region of interest" description="Disordered" evidence="2">
    <location>
        <begin position="268"/>
        <end position="299"/>
    </location>
</feature>
<feature type="coiled-coil region" evidence="1">
    <location>
        <begin position="50"/>
        <end position="78"/>
    </location>
</feature>
<feature type="coiled-coil region" evidence="1">
    <location>
        <begin position="390"/>
        <end position="420"/>
    </location>
</feature>
<feature type="short sequence motif" description="AIM" evidence="5">
    <location>
        <begin position="178"/>
        <end position="181"/>
    </location>
</feature>
<feature type="compositionally biased region" description="Basic and acidic residues" evidence="2">
    <location>
        <begin position="268"/>
        <end position="284"/>
    </location>
</feature>
<feature type="mutagenesis site" description="Impairs interaction with atg8. Impairs autophagy and decreases lipidation of atg8; when associated with A-181." evidence="3">
    <original>F</original>
    <variation>A</variation>
    <location>
        <position position="178"/>
    </location>
</feature>
<feature type="mutagenesis site" description="Impairs interaction with atg8. Impairs autophagy and decreases lipidation of atg8; when associated with A-178." evidence="3">
    <original>V</original>
    <variation>A</variation>
    <location>
        <position position="181"/>
    </location>
</feature>
<reference key="1">
    <citation type="journal article" date="2002" name="Nature">
        <title>The genome sequence of Schizosaccharomyces pombe.</title>
        <authorList>
            <person name="Wood V."/>
            <person name="Gwilliam R."/>
            <person name="Rajandream M.A."/>
            <person name="Lyne M.H."/>
            <person name="Lyne R."/>
            <person name="Stewart A."/>
            <person name="Sgouros J.G."/>
            <person name="Peat N."/>
            <person name="Hayles J."/>
            <person name="Baker S.G."/>
            <person name="Basham D."/>
            <person name="Bowman S."/>
            <person name="Brooks K."/>
            <person name="Brown D."/>
            <person name="Brown S."/>
            <person name="Chillingworth T."/>
            <person name="Churcher C.M."/>
            <person name="Collins M."/>
            <person name="Connor R."/>
            <person name="Cronin A."/>
            <person name="Davis P."/>
            <person name="Feltwell T."/>
            <person name="Fraser A."/>
            <person name="Gentles S."/>
            <person name="Goble A."/>
            <person name="Hamlin N."/>
            <person name="Harris D.E."/>
            <person name="Hidalgo J."/>
            <person name="Hodgson G."/>
            <person name="Holroyd S."/>
            <person name="Hornsby T."/>
            <person name="Howarth S."/>
            <person name="Huckle E.J."/>
            <person name="Hunt S."/>
            <person name="Jagels K."/>
            <person name="James K.D."/>
            <person name="Jones L."/>
            <person name="Jones M."/>
            <person name="Leather S."/>
            <person name="McDonald S."/>
            <person name="McLean J."/>
            <person name="Mooney P."/>
            <person name="Moule S."/>
            <person name="Mungall K.L."/>
            <person name="Murphy L.D."/>
            <person name="Niblett D."/>
            <person name="Odell C."/>
            <person name="Oliver K."/>
            <person name="O'Neil S."/>
            <person name="Pearson D."/>
            <person name="Quail M.A."/>
            <person name="Rabbinowitsch E."/>
            <person name="Rutherford K.M."/>
            <person name="Rutter S."/>
            <person name="Saunders D."/>
            <person name="Seeger K."/>
            <person name="Sharp S."/>
            <person name="Skelton J."/>
            <person name="Simmonds M.N."/>
            <person name="Squares R."/>
            <person name="Squares S."/>
            <person name="Stevens K."/>
            <person name="Taylor K."/>
            <person name="Taylor R.G."/>
            <person name="Tivey A."/>
            <person name="Walsh S.V."/>
            <person name="Warren T."/>
            <person name="Whitehead S."/>
            <person name="Woodward J.R."/>
            <person name="Volckaert G."/>
            <person name="Aert R."/>
            <person name="Robben J."/>
            <person name="Grymonprez B."/>
            <person name="Weltjens I."/>
            <person name="Vanstreels E."/>
            <person name="Rieger M."/>
            <person name="Schaefer M."/>
            <person name="Mueller-Auer S."/>
            <person name="Gabel C."/>
            <person name="Fuchs M."/>
            <person name="Duesterhoeft A."/>
            <person name="Fritzc C."/>
            <person name="Holzer E."/>
            <person name="Moestl D."/>
            <person name="Hilbert H."/>
            <person name="Borzym K."/>
            <person name="Langer I."/>
            <person name="Beck A."/>
            <person name="Lehrach H."/>
            <person name="Reinhardt R."/>
            <person name="Pohl T.M."/>
            <person name="Eger P."/>
            <person name="Zimmermann W."/>
            <person name="Wedler H."/>
            <person name="Wambutt R."/>
            <person name="Purnelle B."/>
            <person name="Goffeau A."/>
            <person name="Cadieu E."/>
            <person name="Dreano S."/>
            <person name="Gloux S."/>
            <person name="Lelaure V."/>
            <person name="Mottier S."/>
            <person name="Galibert F."/>
            <person name="Aves S.J."/>
            <person name="Xiang Z."/>
            <person name="Hunt C."/>
            <person name="Moore K."/>
            <person name="Hurst S.M."/>
            <person name="Lucas M."/>
            <person name="Rochet M."/>
            <person name="Gaillardin C."/>
            <person name="Tallada V.A."/>
            <person name="Garzon A."/>
            <person name="Thode G."/>
            <person name="Daga R.R."/>
            <person name="Cruzado L."/>
            <person name="Jimenez J."/>
            <person name="Sanchez M."/>
            <person name="del Rey F."/>
            <person name="Benito J."/>
            <person name="Dominguez A."/>
            <person name="Revuelta J.L."/>
            <person name="Moreno S."/>
            <person name="Armstrong J."/>
            <person name="Forsburg S.L."/>
            <person name="Cerutti L."/>
            <person name="Lowe T."/>
            <person name="McCombie W.R."/>
            <person name="Paulsen I."/>
            <person name="Potashkin J."/>
            <person name="Shpakovski G.V."/>
            <person name="Ussery D."/>
            <person name="Barrell B.G."/>
            <person name="Nurse P."/>
        </authorList>
    </citation>
    <scope>NUCLEOTIDE SEQUENCE [LARGE SCALE GENOMIC DNA]</scope>
    <source>
        <strain>972 / ATCC 24843</strain>
    </source>
</reference>
<reference key="2">
    <citation type="journal article" date="2011" name="Science">
        <title>Comparative functional genomics of the fission yeasts.</title>
        <authorList>
            <person name="Rhind N."/>
            <person name="Chen Z."/>
            <person name="Yassour M."/>
            <person name="Thompson D.A."/>
            <person name="Haas B.J."/>
            <person name="Habib N."/>
            <person name="Wapinski I."/>
            <person name="Roy S."/>
            <person name="Lin M.F."/>
            <person name="Heiman D.I."/>
            <person name="Young S.K."/>
            <person name="Furuya K."/>
            <person name="Guo Y."/>
            <person name="Pidoux A."/>
            <person name="Chen H.M."/>
            <person name="Robbertse B."/>
            <person name="Goldberg J.M."/>
            <person name="Aoki K."/>
            <person name="Bayne E.H."/>
            <person name="Berlin A.M."/>
            <person name="Desjardins C.A."/>
            <person name="Dobbs E."/>
            <person name="Dukaj L."/>
            <person name="Fan L."/>
            <person name="FitzGerald M.G."/>
            <person name="French C."/>
            <person name="Gujja S."/>
            <person name="Hansen K."/>
            <person name="Keifenheim D."/>
            <person name="Levin J.Z."/>
            <person name="Mosher R.A."/>
            <person name="Mueller C.A."/>
            <person name="Pfiffner J."/>
            <person name="Priest M."/>
            <person name="Russ C."/>
            <person name="Smialowska A."/>
            <person name="Swoboda P."/>
            <person name="Sykes S.M."/>
            <person name="Vaughn M."/>
            <person name="Vengrova S."/>
            <person name="Yoder R."/>
            <person name="Zeng Q."/>
            <person name="Allshire R."/>
            <person name="Baulcombe D."/>
            <person name="Birren B.W."/>
            <person name="Brown W."/>
            <person name="Ekwall K."/>
            <person name="Kellis M."/>
            <person name="Leatherwood J."/>
            <person name="Levin H."/>
            <person name="Margalit H."/>
            <person name="Martienssen R."/>
            <person name="Nieduszynski C.A."/>
            <person name="Spatafora J.W."/>
            <person name="Friedman N."/>
            <person name="Dalgaard J.Z."/>
            <person name="Baumann P."/>
            <person name="Niki H."/>
            <person name="Regev A."/>
            <person name="Nusbaum C."/>
        </authorList>
    </citation>
    <scope>REVISION OF GENE MODEL</scope>
</reference>
<reference key="3">
    <citation type="journal article" date="2020" name="Autophagy">
        <title>Atg38-Atg8 interaction in fission yeast establishes a positive feedback loop to promote autophagy.</title>
        <authorList>
            <person name="Yu Z.Q."/>
            <person name="Sun L.L."/>
            <person name="Jiang Z.D."/>
            <person name="Liu X.M."/>
            <person name="Zhao D."/>
            <person name="Wang H.T."/>
            <person name="He W.Z."/>
            <person name="Dong M.Q."/>
            <person name="Du L.L."/>
        </authorList>
    </citation>
    <scope>FUNCTION</scope>
    <scope>IDENTIFICATION IN THE AUTOPHAGY-SPECIFIC VPS34 PI3-KINASE COMPLEX I</scope>
    <scope>INTERACTION WITH ATG8</scope>
    <scope>SUBCELLULAR LOCATION</scope>
    <scope>DISRUPTION PHENOTYPE</scope>
    <scope>MOTIF AIM</scope>
    <scope>MUTAGENESIS OF PHE-178 AND VAL-181</scope>
</reference>
<comment type="function">
    <text evidence="3">Functions as a part of the autophagy-specific VPS34 PI3-kinase complex I that plays a role in autophagosome assembly (PubMed:31941401). This complex is essential to recruit the atg8-phosphatidylinositol conjugate and the atg12-atg5 conjugate to the pre-autophagosomal structure (PubMed:31941401). By binding to atg8 at the phagophore assembly site, atg38 helps establish a positive feedback loop for recruitment of phagophore assembly proteins, including atg8 (PubMed:31941401).</text>
</comment>
<comment type="subunit">
    <text evidence="3">Component of the autophagy-specific vps34 PI3-kinase complex I composed of vps15, atg6, pik3/vps34, atg14 and atg38 (PubMed:31941401). Interacts (via AIM motif) with atg8; the interaction is direct and leads to recruitment of the autophagy-specific vps34 PI3-kinase complex I to the phagophore assembly site (PubMed:31941401).</text>
</comment>
<comment type="subcellular location">
    <subcellularLocation>
        <location evidence="3">Preautophagosomal structure membrane</location>
    </subcellularLocation>
    <subcellularLocation>
        <location evidence="3">Cytoplasm</location>
        <location evidence="3">Cytosol</location>
    </subcellularLocation>
</comment>
<comment type="disruption phenotype">
    <text evidence="3">Defective in nitrogen starvation-induced autophagy (PubMed:31941401). Cells are not temperature sensitive and have normal sized vacuoles (PubMed:31941401).</text>
</comment>
<comment type="similarity">
    <text evidence="4">Belongs to the ATG38 family.</text>
</comment>
<dbReference type="EMBL" id="CU329671">
    <property type="protein sequence ID" value="CAA22528.2"/>
    <property type="molecule type" value="Genomic_DNA"/>
</dbReference>
<dbReference type="PIR" id="T40620">
    <property type="entry name" value="T40620"/>
</dbReference>
<dbReference type="RefSeq" id="NP_595087.2">
    <property type="nucleotide sequence ID" value="NM_001020994.2"/>
</dbReference>
<dbReference type="SMR" id="O94427"/>
<dbReference type="BioGRID" id="277600">
    <property type="interactions" value="5"/>
</dbReference>
<dbReference type="ComplexPortal" id="CPX-25763">
    <property type="entry name" value="Phosphatidylinositol 3-kinase complex, class III, type I"/>
</dbReference>
<dbReference type="STRING" id="284812.O94427"/>
<dbReference type="iPTMnet" id="O94427"/>
<dbReference type="PaxDb" id="4896-SPBC660.08.1"/>
<dbReference type="EnsemblFungi" id="SPBC660.08.1">
    <property type="protein sequence ID" value="SPBC660.08.1:pep"/>
    <property type="gene ID" value="SPBC660.08"/>
</dbReference>
<dbReference type="GeneID" id="2541085"/>
<dbReference type="KEGG" id="spo:2541085"/>
<dbReference type="PomBase" id="SPBC660.08">
    <property type="gene designation" value="atg38"/>
</dbReference>
<dbReference type="VEuPathDB" id="FungiDB:SPBC660.08"/>
<dbReference type="HOGENOM" id="CLU_689190_0_0_1"/>
<dbReference type="InParanoid" id="O94427"/>
<dbReference type="OMA" id="CASYQIE"/>
<dbReference type="PRO" id="PR:O94427"/>
<dbReference type="Proteomes" id="UP000002485">
    <property type="component" value="Chromosome II"/>
</dbReference>
<dbReference type="GO" id="GO:0005829">
    <property type="term" value="C:cytosol"/>
    <property type="evidence" value="ECO:0007669"/>
    <property type="project" value="UniProtKB-SubCell"/>
</dbReference>
<dbReference type="GO" id="GO:0005739">
    <property type="term" value="C:mitochondrion"/>
    <property type="evidence" value="ECO:0007669"/>
    <property type="project" value="UniProtKB-KW"/>
</dbReference>
<dbReference type="GO" id="GO:0000407">
    <property type="term" value="C:phagophore assembly site"/>
    <property type="evidence" value="ECO:0000314"/>
    <property type="project" value="PomBase"/>
</dbReference>
<dbReference type="GO" id="GO:0034045">
    <property type="term" value="C:phagophore assembly site membrane"/>
    <property type="evidence" value="ECO:0007669"/>
    <property type="project" value="UniProtKB-SubCell"/>
</dbReference>
<dbReference type="GO" id="GO:0034271">
    <property type="term" value="C:phosphatidylinositol 3-kinase complex, class III, type I"/>
    <property type="evidence" value="ECO:0000314"/>
    <property type="project" value="PomBase"/>
</dbReference>
<dbReference type="GO" id="GO:0016236">
    <property type="term" value="P:macroautophagy"/>
    <property type="evidence" value="ECO:0000315"/>
    <property type="project" value="PomBase"/>
</dbReference>
<dbReference type="GO" id="GO:0051321">
    <property type="term" value="P:meiotic cell cycle"/>
    <property type="evidence" value="ECO:0007669"/>
    <property type="project" value="UniProtKB-KW"/>
</dbReference>
<dbReference type="Gene3D" id="1.20.58.80">
    <property type="entry name" value="Phosphotransferase system, lactose/cellobiose-type IIA subunit"/>
    <property type="match status" value="1"/>
</dbReference>
<dbReference type="InterPro" id="IPR036181">
    <property type="entry name" value="MIT_dom_sf"/>
</dbReference>
<dbReference type="SUPFAM" id="SSF116846">
    <property type="entry name" value="MIT domain"/>
    <property type="match status" value="1"/>
</dbReference>
<evidence type="ECO:0000255" key="1"/>
<evidence type="ECO:0000256" key="2">
    <source>
        <dbReference type="SAM" id="MobiDB-lite"/>
    </source>
</evidence>
<evidence type="ECO:0000269" key="3">
    <source>
    </source>
</evidence>
<evidence type="ECO:0000305" key="4"/>
<evidence type="ECO:0000305" key="5">
    <source>
    </source>
</evidence>
<evidence type="ECO:0000312" key="6">
    <source>
        <dbReference type="PomBase" id="SPBC660.08"/>
    </source>
</evidence>
<proteinExistence type="evidence at protein level"/>
<sequence length="424" mass="48539">MVRYSLRKAHEYARDGENQEVLGEISQAIMYYGLAKSQFEKICQNTAQPLIKRCANNQIEELMVRIRELRESLPNKQTPISMSMSTRLSPMYTSSLTPRFTSNSMVLPGDHNTTVRLKPSFREALMEDSEDDLYQMYSKFEMQVKKLSTNYGLAVAFSIVPMDDDQPSPSIFSSDESFLIVEGDDFSLGNSVEEDANATSKEDPAYQNTNEQIQPLSNFDISQQEYLNNTRIPYENEDLHLQHITQGTTDDNNVSKFLIPSYNDAKELSEEEMGRSHKREESFKRAFGHASSSESSIGEITDSREDIQSNRLVNGSWENNDFTKEINNNFPDRSETPTLQTIEAPTKLMKYTRRKSLFRFPFFRSISGKKKEEPMESGTDSLESSTAQITVDSQLKIKQLETQIATLQKQLEQFQTSTLDQDLH</sequence>
<organism>
    <name type="scientific">Schizosaccharomyces pombe (strain 972 / ATCC 24843)</name>
    <name type="common">Fission yeast</name>
    <dbReference type="NCBI Taxonomy" id="284812"/>
    <lineage>
        <taxon>Eukaryota</taxon>
        <taxon>Fungi</taxon>
        <taxon>Dikarya</taxon>
        <taxon>Ascomycota</taxon>
        <taxon>Taphrinomycotina</taxon>
        <taxon>Schizosaccharomycetes</taxon>
        <taxon>Schizosaccharomycetales</taxon>
        <taxon>Schizosaccharomycetaceae</taxon>
        <taxon>Schizosaccharomyces</taxon>
    </lineage>
</organism>
<name>ATG38_SCHPO</name>
<protein>
    <recommendedName>
        <fullName evidence="4">PtdIns3K complex I subunit atg38</fullName>
    </recommendedName>
    <alternativeName>
        <fullName>Meiotically up-regulated gene 167 protein</fullName>
    </alternativeName>
</protein>
<accession>O94427</accession>